<protein>
    <recommendedName>
        <fullName>Uncharacterized protein C1604.03c</fullName>
    </recommendedName>
</protein>
<name>YG03_SCHPO</name>
<keyword id="KW-1185">Reference proteome</keyword>
<organism>
    <name type="scientific">Schizosaccharomyces pombe (strain 972 / ATCC 24843)</name>
    <name type="common">Fission yeast</name>
    <dbReference type="NCBI Taxonomy" id="284812"/>
    <lineage>
        <taxon>Eukaryota</taxon>
        <taxon>Fungi</taxon>
        <taxon>Dikarya</taxon>
        <taxon>Ascomycota</taxon>
        <taxon>Taphrinomycotina</taxon>
        <taxon>Schizosaccharomycetes</taxon>
        <taxon>Schizosaccharomycetales</taxon>
        <taxon>Schizosaccharomycetaceae</taxon>
        <taxon>Schizosaccharomyces</taxon>
    </lineage>
</organism>
<reference key="1">
    <citation type="journal article" date="2002" name="Nature">
        <title>The genome sequence of Schizosaccharomyces pombe.</title>
        <authorList>
            <person name="Wood V."/>
            <person name="Gwilliam R."/>
            <person name="Rajandream M.A."/>
            <person name="Lyne M.H."/>
            <person name="Lyne R."/>
            <person name="Stewart A."/>
            <person name="Sgouros J.G."/>
            <person name="Peat N."/>
            <person name="Hayles J."/>
            <person name="Baker S.G."/>
            <person name="Basham D."/>
            <person name="Bowman S."/>
            <person name="Brooks K."/>
            <person name="Brown D."/>
            <person name="Brown S."/>
            <person name="Chillingworth T."/>
            <person name="Churcher C.M."/>
            <person name="Collins M."/>
            <person name="Connor R."/>
            <person name="Cronin A."/>
            <person name="Davis P."/>
            <person name="Feltwell T."/>
            <person name="Fraser A."/>
            <person name="Gentles S."/>
            <person name="Goble A."/>
            <person name="Hamlin N."/>
            <person name="Harris D.E."/>
            <person name="Hidalgo J."/>
            <person name="Hodgson G."/>
            <person name="Holroyd S."/>
            <person name="Hornsby T."/>
            <person name="Howarth S."/>
            <person name="Huckle E.J."/>
            <person name="Hunt S."/>
            <person name="Jagels K."/>
            <person name="James K.D."/>
            <person name="Jones L."/>
            <person name="Jones M."/>
            <person name="Leather S."/>
            <person name="McDonald S."/>
            <person name="McLean J."/>
            <person name="Mooney P."/>
            <person name="Moule S."/>
            <person name="Mungall K.L."/>
            <person name="Murphy L.D."/>
            <person name="Niblett D."/>
            <person name="Odell C."/>
            <person name="Oliver K."/>
            <person name="O'Neil S."/>
            <person name="Pearson D."/>
            <person name="Quail M.A."/>
            <person name="Rabbinowitsch E."/>
            <person name="Rutherford K.M."/>
            <person name="Rutter S."/>
            <person name="Saunders D."/>
            <person name="Seeger K."/>
            <person name="Sharp S."/>
            <person name="Skelton J."/>
            <person name="Simmonds M.N."/>
            <person name="Squares R."/>
            <person name="Squares S."/>
            <person name="Stevens K."/>
            <person name="Taylor K."/>
            <person name="Taylor R.G."/>
            <person name="Tivey A."/>
            <person name="Walsh S.V."/>
            <person name="Warren T."/>
            <person name="Whitehead S."/>
            <person name="Woodward J.R."/>
            <person name="Volckaert G."/>
            <person name="Aert R."/>
            <person name="Robben J."/>
            <person name="Grymonprez B."/>
            <person name="Weltjens I."/>
            <person name="Vanstreels E."/>
            <person name="Rieger M."/>
            <person name="Schaefer M."/>
            <person name="Mueller-Auer S."/>
            <person name="Gabel C."/>
            <person name="Fuchs M."/>
            <person name="Duesterhoeft A."/>
            <person name="Fritzc C."/>
            <person name="Holzer E."/>
            <person name="Moestl D."/>
            <person name="Hilbert H."/>
            <person name="Borzym K."/>
            <person name="Langer I."/>
            <person name="Beck A."/>
            <person name="Lehrach H."/>
            <person name="Reinhardt R."/>
            <person name="Pohl T.M."/>
            <person name="Eger P."/>
            <person name="Zimmermann W."/>
            <person name="Wedler H."/>
            <person name="Wambutt R."/>
            <person name="Purnelle B."/>
            <person name="Goffeau A."/>
            <person name="Cadieu E."/>
            <person name="Dreano S."/>
            <person name="Gloux S."/>
            <person name="Lelaure V."/>
            <person name="Mottier S."/>
            <person name="Galibert F."/>
            <person name="Aves S.J."/>
            <person name="Xiang Z."/>
            <person name="Hunt C."/>
            <person name="Moore K."/>
            <person name="Hurst S.M."/>
            <person name="Lucas M."/>
            <person name="Rochet M."/>
            <person name="Gaillardin C."/>
            <person name="Tallada V.A."/>
            <person name="Garzon A."/>
            <person name="Thode G."/>
            <person name="Daga R.R."/>
            <person name="Cruzado L."/>
            <person name="Jimenez J."/>
            <person name="Sanchez M."/>
            <person name="del Rey F."/>
            <person name="Benito J."/>
            <person name="Dominguez A."/>
            <person name="Revuelta J.L."/>
            <person name="Moreno S."/>
            <person name="Armstrong J."/>
            <person name="Forsburg S.L."/>
            <person name="Cerutti L."/>
            <person name="Lowe T."/>
            <person name="McCombie W.R."/>
            <person name="Paulsen I."/>
            <person name="Potashkin J."/>
            <person name="Shpakovski G.V."/>
            <person name="Ussery D."/>
            <person name="Barrell B.G."/>
            <person name="Nurse P."/>
        </authorList>
    </citation>
    <scope>NUCLEOTIDE SEQUENCE [LARGE SCALE GENOMIC DNA]</scope>
    <source>
        <strain>972 / ATCC 24843</strain>
    </source>
</reference>
<sequence length="330" mass="37373">MGAILSTPKTPIEVRRKRIVPLFRANHTRFRPVDEKNRINAVPLLLLGCLYGKYKDDDFVDFFDKAIPLLVPQTHKGLDTYEIDVSTYKTHIGHPKFIEPFVLFYGDRLVHDARYNLHELVWQTLSRNPEYIKGLCYDSCTPLANLAVGLSLNIQEVLIDCFATAACFTTEDTSINPIPTLPSVFCTIVDDEGISLKELLYIIEESLLKNAIPDPFSVSTYTLKSAFEHLVKKDFLKYYTAYLASSAVDYIDAYFTESFGSFFISRLASQFLVSFQTLPSFFSFPLVTDNWQHLAALPFNSTYETFRAFDHPSTNGPAIGPLYNAAPAPR</sequence>
<proteinExistence type="predicted"/>
<accession>O94369</accession>
<feature type="chain" id="PRO_0000116751" description="Uncharacterized protein C1604.03c">
    <location>
        <begin position="1"/>
        <end position="330"/>
    </location>
</feature>
<dbReference type="EMBL" id="CU329671">
    <property type="protein sequence ID" value="CAA22336.1"/>
    <property type="molecule type" value="Genomic_DNA"/>
</dbReference>
<dbReference type="PIR" id="T39511">
    <property type="entry name" value="T39511"/>
</dbReference>
<dbReference type="RefSeq" id="NP_596637.1">
    <property type="nucleotide sequence ID" value="NM_001022558.2"/>
</dbReference>
<dbReference type="BioGRID" id="276185">
    <property type="interactions" value="23"/>
</dbReference>
<dbReference type="PaxDb" id="4896-SPBC1604.03c.1"/>
<dbReference type="EnsemblFungi" id="SPBC1604.03c.1">
    <property type="protein sequence ID" value="SPBC1604.03c.1:pep"/>
    <property type="gene ID" value="SPBC1604.03c"/>
</dbReference>
<dbReference type="KEGG" id="spo:2539628"/>
<dbReference type="PomBase" id="SPBC1604.03c"/>
<dbReference type="VEuPathDB" id="FungiDB:SPBC1604.03c"/>
<dbReference type="HOGENOM" id="CLU_927993_0_0_1"/>
<dbReference type="InParanoid" id="O94369"/>
<dbReference type="OMA" id="FRANHTR"/>
<dbReference type="PRO" id="PR:O94369"/>
<dbReference type="Proteomes" id="UP000002485">
    <property type="component" value="Chromosome II"/>
</dbReference>
<dbReference type="GO" id="GO:0005783">
    <property type="term" value="C:endoplasmic reticulum"/>
    <property type="evidence" value="ECO:0007005"/>
    <property type="project" value="PomBase"/>
</dbReference>
<gene>
    <name type="ORF">SPBC1604.03c</name>
</gene>